<protein>
    <recommendedName>
        <fullName evidence="1">UDP-N-acetylmuramate--L-alanine ligase</fullName>
        <ecNumber evidence="1">6.3.2.8</ecNumber>
    </recommendedName>
    <alternativeName>
        <fullName evidence="1">UDP-N-acetylmuramoyl-L-alanine synthetase</fullName>
    </alternativeName>
</protein>
<feature type="chain" id="PRO_0000182117" description="UDP-N-acetylmuramate--L-alanine ligase">
    <location>
        <begin position="1"/>
        <end position="494"/>
    </location>
</feature>
<feature type="binding site" evidence="1">
    <location>
        <begin position="122"/>
        <end position="128"/>
    </location>
    <ligand>
        <name>ATP</name>
        <dbReference type="ChEBI" id="CHEBI:30616"/>
    </ligand>
</feature>
<feature type="helix" evidence="2">
    <location>
        <begin position="8"/>
        <end position="10"/>
    </location>
</feature>
<feature type="strand" evidence="2">
    <location>
        <begin position="11"/>
        <end position="16"/>
    </location>
</feature>
<feature type="turn" evidence="2">
    <location>
        <begin position="17"/>
        <end position="19"/>
    </location>
</feature>
<feature type="helix" evidence="2">
    <location>
        <begin position="21"/>
        <end position="32"/>
    </location>
</feature>
<feature type="strand" evidence="2">
    <location>
        <begin position="36"/>
        <end position="43"/>
    </location>
</feature>
<feature type="helix" evidence="2">
    <location>
        <begin position="46"/>
        <end position="53"/>
    </location>
</feature>
<feature type="strand" evidence="2">
    <location>
        <begin position="57"/>
        <end position="61"/>
    </location>
</feature>
<feature type="helix" evidence="2">
    <location>
        <begin position="64"/>
        <end position="68"/>
    </location>
</feature>
<feature type="strand" evidence="2">
    <location>
        <begin position="75"/>
        <end position="79"/>
    </location>
</feature>
<feature type="turn" evidence="2">
    <location>
        <begin position="81"/>
        <end position="83"/>
    </location>
</feature>
<feature type="turn" evidence="3">
    <location>
        <begin position="85"/>
        <end position="87"/>
    </location>
</feature>
<feature type="helix" evidence="2">
    <location>
        <begin position="89"/>
        <end position="97"/>
    </location>
</feature>
<feature type="strand" evidence="2">
    <location>
        <begin position="101"/>
        <end position="103"/>
    </location>
</feature>
<feature type="helix" evidence="2">
    <location>
        <begin position="104"/>
        <end position="112"/>
    </location>
</feature>
<feature type="strand" evidence="2">
    <location>
        <begin position="115"/>
        <end position="124"/>
    </location>
</feature>
<feature type="helix" evidence="2">
    <location>
        <begin position="126"/>
        <end position="139"/>
    </location>
</feature>
<feature type="strand" evidence="2">
    <location>
        <begin position="145"/>
        <end position="150"/>
    </location>
</feature>
<feature type="strand" evidence="2">
    <location>
        <begin position="153"/>
        <end position="160"/>
    </location>
</feature>
<feature type="strand" evidence="2">
    <location>
        <begin position="163"/>
        <end position="170"/>
    </location>
</feature>
<feature type="strand" evidence="2">
    <location>
        <begin position="174"/>
        <end position="176"/>
    </location>
</feature>
<feature type="helix" evidence="2">
    <location>
        <begin position="177"/>
        <end position="180"/>
    </location>
</feature>
<feature type="strand" evidence="2">
    <location>
        <begin position="184"/>
        <end position="188"/>
    </location>
</feature>
<feature type="helix" evidence="2">
    <location>
        <begin position="196"/>
        <end position="198"/>
    </location>
</feature>
<feature type="helix" evidence="2">
    <location>
        <begin position="202"/>
        <end position="214"/>
    </location>
</feature>
<feature type="strand" evidence="2">
    <location>
        <begin position="221"/>
        <end position="228"/>
    </location>
</feature>
<feature type="helix" evidence="2">
    <location>
        <begin position="229"/>
        <end position="239"/>
    </location>
</feature>
<feature type="turn" evidence="2">
    <location>
        <begin position="240"/>
        <end position="242"/>
    </location>
</feature>
<feature type="strand" evidence="2">
    <location>
        <begin position="244"/>
        <end position="251"/>
    </location>
</feature>
<feature type="strand" evidence="2">
    <location>
        <begin position="256"/>
        <end position="265"/>
    </location>
</feature>
<feature type="strand" evidence="2">
    <location>
        <begin position="270"/>
        <end position="276"/>
    </location>
</feature>
<feature type="strand" evidence="2">
    <location>
        <begin position="286"/>
        <end position="293"/>
    </location>
</feature>
<feature type="helix" evidence="2">
    <location>
        <begin position="296"/>
        <end position="311"/>
    </location>
</feature>
<feature type="helix" evidence="2">
    <location>
        <begin position="316"/>
        <end position="324"/>
    </location>
</feature>
<feature type="strand" evidence="2">
    <location>
        <begin position="332"/>
        <end position="341"/>
    </location>
</feature>
<feature type="helix" evidence="2">
    <location>
        <begin position="342"/>
        <end position="344"/>
    </location>
</feature>
<feature type="strand" evidence="2">
    <location>
        <begin position="346"/>
        <end position="351"/>
    </location>
</feature>
<feature type="helix" evidence="2">
    <location>
        <begin position="356"/>
        <end position="370"/>
    </location>
</feature>
<feature type="turn" evidence="2">
    <location>
        <begin position="371"/>
        <end position="374"/>
    </location>
</feature>
<feature type="strand" evidence="2">
    <location>
        <begin position="378"/>
        <end position="383"/>
    </location>
</feature>
<feature type="helix" evidence="2">
    <location>
        <begin position="387"/>
        <end position="401"/>
    </location>
</feature>
<feature type="strand" evidence="2">
    <location>
        <begin position="404"/>
        <end position="409"/>
    </location>
</feature>
<feature type="helix" evidence="2">
    <location>
        <begin position="425"/>
        <end position="429"/>
    </location>
</feature>
<feature type="strand" evidence="2">
    <location>
        <begin position="434"/>
        <end position="438"/>
    </location>
</feature>
<feature type="helix" evidence="2">
    <location>
        <begin position="442"/>
        <end position="444"/>
    </location>
</feature>
<feature type="helix" evidence="2">
    <location>
        <begin position="445"/>
        <end position="452"/>
    </location>
</feature>
<feature type="strand" evidence="2">
    <location>
        <begin position="458"/>
        <end position="465"/>
    </location>
</feature>
<feature type="helix" evidence="2">
    <location>
        <begin position="466"/>
        <end position="469"/>
    </location>
</feature>
<feature type="helix" evidence="2">
    <location>
        <begin position="470"/>
        <end position="481"/>
    </location>
</feature>
<proteinExistence type="evidence at protein level"/>
<dbReference type="EC" id="6.3.2.8" evidence="1"/>
<dbReference type="EMBL" id="LT708304">
    <property type="protein sequence ID" value="SIU00784.1"/>
    <property type="molecule type" value="Genomic_DNA"/>
</dbReference>
<dbReference type="RefSeq" id="NP_855825.1">
    <property type="nucleotide sequence ID" value="NC_002945.3"/>
</dbReference>
<dbReference type="RefSeq" id="WP_003411159.1">
    <property type="nucleotide sequence ID" value="NC_002945.4"/>
</dbReference>
<dbReference type="PDB" id="7BVA">
    <property type="method" value="X-ray"/>
    <property type="resolution" value="2.30 A"/>
    <property type="chains" value="A/B=1-494"/>
</dbReference>
<dbReference type="PDB" id="7BVB">
    <property type="method" value="X-ray"/>
    <property type="resolution" value="3.19 A"/>
    <property type="chains" value="A/B=1-494"/>
</dbReference>
<dbReference type="PDBsum" id="7BVA"/>
<dbReference type="PDBsum" id="7BVB"/>
<dbReference type="SMR" id="P65473"/>
<dbReference type="KEGG" id="mbo:BQ2027_MB2176C"/>
<dbReference type="PATRIC" id="fig|233413.5.peg.2392"/>
<dbReference type="UniPathway" id="UPA00219"/>
<dbReference type="Proteomes" id="UP000001419">
    <property type="component" value="Chromosome"/>
</dbReference>
<dbReference type="GO" id="GO:0005737">
    <property type="term" value="C:cytoplasm"/>
    <property type="evidence" value="ECO:0007669"/>
    <property type="project" value="UniProtKB-SubCell"/>
</dbReference>
<dbReference type="GO" id="GO:0005524">
    <property type="term" value="F:ATP binding"/>
    <property type="evidence" value="ECO:0007669"/>
    <property type="project" value="UniProtKB-UniRule"/>
</dbReference>
<dbReference type="GO" id="GO:0008763">
    <property type="term" value="F:UDP-N-acetylmuramate-L-alanine ligase activity"/>
    <property type="evidence" value="ECO:0007669"/>
    <property type="project" value="UniProtKB-UniRule"/>
</dbReference>
<dbReference type="GO" id="GO:0051301">
    <property type="term" value="P:cell division"/>
    <property type="evidence" value="ECO:0007669"/>
    <property type="project" value="UniProtKB-KW"/>
</dbReference>
<dbReference type="GO" id="GO:0071555">
    <property type="term" value="P:cell wall organization"/>
    <property type="evidence" value="ECO:0007669"/>
    <property type="project" value="UniProtKB-KW"/>
</dbReference>
<dbReference type="GO" id="GO:0009252">
    <property type="term" value="P:peptidoglycan biosynthetic process"/>
    <property type="evidence" value="ECO:0007669"/>
    <property type="project" value="UniProtKB-UniRule"/>
</dbReference>
<dbReference type="GO" id="GO:0008360">
    <property type="term" value="P:regulation of cell shape"/>
    <property type="evidence" value="ECO:0007669"/>
    <property type="project" value="UniProtKB-KW"/>
</dbReference>
<dbReference type="FunFam" id="3.40.50.720:FF:000046">
    <property type="entry name" value="UDP-N-acetylmuramate--L-alanine ligase"/>
    <property type="match status" value="1"/>
</dbReference>
<dbReference type="FunFam" id="3.90.190.20:FF:000016">
    <property type="entry name" value="UDP-N-acetylmuramate--L-alanine ligase"/>
    <property type="match status" value="1"/>
</dbReference>
<dbReference type="Gene3D" id="3.90.190.20">
    <property type="entry name" value="Mur ligase, C-terminal domain"/>
    <property type="match status" value="1"/>
</dbReference>
<dbReference type="Gene3D" id="3.40.1190.10">
    <property type="entry name" value="Mur-like, catalytic domain"/>
    <property type="match status" value="1"/>
</dbReference>
<dbReference type="Gene3D" id="3.40.50.720">
    <property type="entry name" value="NAD(P)-binding Rossmann-like Domain"/>
    <property type="match status" value="1"/>
</dbReference>
<dbReference type="HAMAP" id="MF_00046">
    <property type="entry name" value="MurC"/>
    <property type="match status" value="1"/>
</dbReference>
<dbReference type="InterPro" id="IPR036565">
    <property type="entry name" value="Mur-like_cat_sf"/>
</dbReference>
<dbReference type="InterPro" id="IPR004101">
    <property type="entry name" value="Mur_ligase_C"/>
</dbReference>
<dbReference type="InterPro" id="IPR036615">
    <property type="entry name" value="Mur_ligase_C_dom_sf"/>
</dbReference>
<dbReference type="InterPro" id="IPR013221">
    <property type="entry name" value="Mur_ligase_cen"/>
</dbReference>
<dbReference type="InterPro" id="IPR000713">
    <property type="entry name" value="Mur_ligase_N"/>
</dbReference>
<dbReference type="InterPro" id="IPR050061">
    <property type="entry name" value="MurCDEF_pg_biosynth"/>
</dbReference>
<dbReference type="InterPro" id="IPR005758">
    <property type="entry name" value="UDP-N-AcMur_Ala_ligase_MurC"/>
</dbReference>
<dbReference type="NCBIfam" id="TIGR01082">
    <property type="entry name" value="murC"/>
    <property type="match status" value="1"/>
</dbReference>
<dbReference type="PANTHER" id="PTHR43445:SF3">
    <property type="entry name" value="UDP-N-ACETYLMURAMATE--L-ALANINE LIGASE"/>
    <property type="match status" value="1"/>
</dbReference>
<dbReference type="PANTHER" id="PTHR43445">
    <property type="entry name" value="UDP-N-ACETYLMURAMATE--L-ALANINE LIGASE-RELATED"/>
    <property type="match status" value="1"/>
</dbReference>
<dbReference type="Pfam" id="PF01225">
    <property type="entry name" value="Mur_ligase"/>
    <property type="match status" value="1"/>
</dbReference>
<dbReference type="Pfam" id="PF02875">
    <property type="entry name" value="Mur_ligase_C"/>
    <property type="match status" value="1"/>
</dbReference>
<dbReference type="Pfam" id="PF08245">
    <property type="entry name" value="Mur_ligase_M"/>
    <property type="match status" value="1"/>
</dbReference>
<dbReference type="SUPFAM" id="SSF51984">
    <property type="entry name" value="MurCD N-terminal domain"/>
    <property type="match status" value="1"/>
</dbReference>
<dbReference type="SUPFAM" id="SSF53623">
    <property type="entry name" value="MurD-like peptide ligases, catalytic domain"/>
    <property type="match status" value="1"/>
</dbReference>
<dbReference type="SUPFAM" id="SSF53244">
    <property type="entry name" value="MurD-like peptide ligases, peptide-binding domain"/>
    <property type="match status" value="1"/>
</dbReference>
<comment type="function">
    <text evidence="1">Cell wall formation.</text>
</comment>
<comment type="catalytic activity">
    <reaction evidence="1">
        <text>UDP-N-acetyl-alpha-D-muramate + L-alanine + ATP = UDP-N-acetyl-alpha-D-muramoyl-L-alanine + ADP + phosphate + H(+)</text>
        <dbReference type="Rhea" id="RHEA:23372"/>
        <dbReference type="ChEBI" id="CHEBI:15378"/>
        <dbReference type="ChEBI" id="CHEBI:30616"/>
        <dbReference type="ChEBI" id="CHEBI:43474"/>
        <dbReference type="ChEBI" id="CHEBI:57972"/>
        <dbReference type="ChEBI" id="CHEBI:70757"/>
        <dbReference type="ChEBI" id="CHEBI:83898"/>
        <dbReference type="ChEBI" id="CHEBI:456216"/>
        <dbReference type="EC" id="6.3.2.8"/>
    </reaction>
</comment>
<comment type="pathway">
    <text evidence="1">Cell wall biogenesis; peptidoglycan biosynthesis.</text>
</comment>
<comment type="subcellular location">
    <subcellularLocation>
        <location evidence="1">Cytoplasm</location>
    </subcellularLocation>
</comment>
<comment type="similarity">
    <text evidence="1">Belongs to the MurCDEF family.</text>
</comment>
<keyword id="KW-0002">3D-structure</keyword>
<keyword id="KW-0067">ATP-binding</keyword>
<keyword id="KW-0131">Cell cycle</keyword>
<keyword id="KW-0132">Cell division</keyword>
<keyword id="KW-0133">Cell shape</keyword>
<keyword id="KW-0961">Cell wall biogenesis/degradation</keyword>
<keyword id="KW-0963">Cytoplasm</keyword>
<keyword id="KW-0436">Ligase</keyword>
<keyword id="KW-0547">Nucleotide-binding</keyword>
<keyword id="KW-0573">Peptidoglycan synthesis</keyword>
<keyword id="KW-1185">Reference proteome</keyword>
<gene>
    <name evidence="1" type="primary">murC</name>
    <name type="ordered locus">BQ2027_MB2176C</name>
</gene>
<evidence type="ECO:0000255" key="1">
    <source>
        <dbReference type="HAMAP-Rule" id="MF_00046"/>
    </source>
</evidence>
<evidence type="ECO:0007829" key="2">
    <source>
        <dbReference type="PDB" id="7BVA"/>
    </source>
</evidence>
<evidence type="ECO:0007829" key="3">
    <source>
        <dbReference type="PDB" id="7BVB"/>
    </source>
</evidence>
<sequence>MSTEQLPPDLRRVHMVGIGGAGMSGIARILLDRGGLVSGSDAKESRGVHALRARGALIRIGHDASSLDLLPGGATAVVTTHAAIPKTNPELVEARRRGIPVVLRPAVLAKLMAGRTTLMVTGTHGKTTTTSMLIVALQHCGLDPSFAVGGELGEAGTNAHHGSGDCFVAEADESDGSLLQYTPHVAVITNIESDHLDFYGSVEAYVAVFDSFVERIVPGGALVVCTDDPGGAALAQRATELGIRVLRYGSVPGETMAATLVSWQQQGVGAVAHIRLASELATAQGPRVMRLSVPGRHMALNALGALLAAVQIGAPADEVLDGLAGFEGVRRRFELVGTCGVGKASVRVFDDYAHHPTEISATLAAARMVLEQGDGGRCMVVFQPHLYSRTKAFAAEFGRALNAADEVFVLDVYGAREQPLAGVSGASVAEHVTVPMRYVPDFSAVAQQVAAAASPGDVIVTMGAGDVTLLGPEILTALRVRANRSAPGRPGVLG</sequence>
<accession>P65473</accession>
<accession>A0A1R3Y2G4</accession>
<accession>O06225</accession>
<accession>X2BK24</accession>
<reference key="1">
    <citation type="journal article" date="2003" name="Proc. Natl. Acad. Sci. U.S.A.">
        <title>The complete genome sequence of Mycobacterium bovis.</title>
        <authorList>
            <person name="Garnier T."/>
            <person name="Eiglmeier K."/>
            <person name="Camus J.-C."/>
            <person name="Medina N."/>
            <person name="Mansoor H."/>
            <person name="Pryor M."/>
            <person name="Duthoy S."/>
            <person name="Grondin S."/>
            <person name="Lacroix C."/>
            <person name="Monsempe C."/>
            <person name="Simon S."/>
            <person name="Harris B."/>
            <person name="Atkin R."/>
            <person name="Doggett J."/>
            <person name="Mayes R."/>
            <person name="Keating L."/>
            <person name="Wheeler P.R."/>
            <person name="Parkhill J."/>
            <person name="Barrell B.G."/>
            <person name="Cole S.T."/>
            <person name="Gordon S.V."/>
            <person name="Hewinson R.G."/>
        </authorList>
    </citation>
    <scope>NUCLEOTIDE SEQUENCE [LARGE SCALE GENOMIC DNA]</scope>
    <source>
        <strain>ATCC BAA-935 / AF2122/97</strain>
    </source>
</reference>
<reference key="2">
    <citation type="journal article" date="2017" name="Genome Announc.">
        <title>Updated reference genome sequence and annotation of Mycobacterium bovis AF2122/97.</title>
        <authorList>
            <person name="Malone K.M."/>
            <person name="Farrell D."/>
            <person name="Stuber T.P."/>
            <person name="Schubert O.T."/>
            <person name="Aebersold R."/>
            <person name="Robbe-Austerman S."/>
            <person name="Gordon S.V."/>
        </authorList>
    </citation>
    <scope>NUCLEOTIDE SEQUENCE [LARGE SCALE GENOMIC DNA]</scope>
    <scope>GENOME REANNOTATION</scope>
    <source>
        <strain>ATCC BAA-935 / AF2122/97</strain>
    </source>
</reference>
<organism>
    <name type="scientific">Mycobacterium bovis (strain ATCC BAA-935 / AF2122/97)</name>
    <dbReference type="NCBI Taxonomy" id="233413"/>
    <lineage>
        <taxon>Bacteria</taxon>
        <taxon>Bacillati</taxon>
        <taxon>Actinomycetota</taxon>
        <taxon>Actinomycetes</taxon>
        <taxon>Mycobacteriales</taxon>
        <taxon>Mycobacteriaceae</taxon>
        <taxon>Mycobacterium</taxon>
        <taxon>Mycobacterium tuberculosis complex</taxon>
    </lineage>
</organism>
<name>MURC_MYCBO</name>